<comment type="similarity">
    <text evidence="2">Belongs to the eukaryotic ribosomal protein eL24 family.</text>
</comment>
<reference key="1">
    <citation type="journal article" date="2004" name="Nature">
        <title>Genome evolution in yeasts.</title>
        <authorList>
            <person name="Dujon B."/>
            <person name="Sherman D."/>
            <person name="Fischer G."/>
            <person name="Durrens P."/>
            <person name="Casaregola S."/>
            <person name="Lafontaine I."/>
            <person name="de Montigny J."/>
            <person name="Marck C."/>
            <person name="Neuveglise C."/>
            <person name="Talla E."/>
            <person name="Goffard N."/>
            <person name="Frangeul L."/>
            <person name="Aigle M."/>
            <person name="Anthouard V."/>
            <person name="Babour A."/>
            <person name="Barbe V."/>
            <person name="Barnay S."/>
            <person name="Blanchin S."/>
            <person name="Beckerich J.-M."/>
            <person name="Beyne E."/>
            <person name="Bleykasten C."/>
            <person name="Boisrame A."/>
            <person name="Boyer J."/>
            <person name="Cattolico L."/>
            <person name="Confanioleri F."/>
            <person name="de Daruvar A."/>
            <person name="Despons L."/>
            <person name="Fabre E."/>
            <person name="Fairhead C."/>
            <person name="Ferry-Dumazet H."/>
            <person name="Groppi A."/>
            <person name="Hantraye F."/>
            <person name="Hennequin C."/>
            <person name="Jauniaux N."/>
            <person name="Joyet P."/>
            <person name="Kachouri R."/>
            <person name="Kerrest A."/>
            <person name="Koszul R."/>
            <person name="Lemaire M."/>
            <person name="Lesur I."/>
            <person name="Ma L."/>
            <person name="Muller H."/>
            <person name="Nicaud J.-M."/>
            <person name="Nikolski M."/>
            <person name="Oztas S."/>
            <person name="Ozier-Kalogeropoulos O."/>
            <person name="Pellenz S."/>
            <person name="Potier S."/>
            <person name="Richard G.-F."/>
            <person name="Straub M.-L."/>
            <person name="Suleau A."/>
            <person name="Swennen D."/>
            <person name="Tekaia F."/>
            <person name="Wesolowski-Louvel M."/>
            <person name="Westhof E."/>
            <person name="Wirth B."/>
            <person name="Zeniou-Meyer M."/>
            <person name="Zivanovic Y."/>
            <person name="Bolotin-Fukuhara M."/>
            <person name="Thierry A."/>
            <person name="Bouchier C."/>
            <person name="Caudron B."/>
            <person name="Scarpelli C."/>
            <person name="Gaillardin C."/>
            <person name="Weissenbach J."/>
            <person name="Wincker P."/>
            <person name="Souciet J.-L."/>
        </authorList>
    </citation>
    <scope>NUCLEOTIDE SEQUENCE [LARGE SCALE GENOMIC DNA]</scope>
    <source>
        <strain>CLIB 122 / E 150</strain>
    </source>
</reference>
<protein>
    <recommendedName>
        <fullName evidence="2">Large ribosomal subunit protein eL24</fullName>
    </recommendedName>
    <alternativeName>
        <fullName>60S ribosomal protein L24</fullName>
    </alternativeName>
</protein>
<keyword id="KW-1185">Reference proteome</keyword>
<keyword id="KW-0687">Ribonucleoprotein</keyword>
<keyword id="KW-0689">Ribosomal protein</keyword>
<sequence>MKIELDSFSGNKIYPGRGTLFVRGDSKIFRFYSSKTASLFKQRKNPRRIAWTVLYRRKHKKGITEEVSKKRSRKSVKAVRGIVGASLDVIKEKRNARPETRNATRAKHAEAAKERKEKEAERRKAAKAAHVAAGGPKVSKLGAKGSAPKVQATSR</sequence>
<accession>Q6C4U6</accession>
<evidence type="ECO:0000256" key="1">
    <source>
        <dbReference type="SAM" id="MobiDB-lite"/>
    </source>
</evidence>
<evidence type="ECO:0000305" key="2"/>
<gene>
    <name type="primary">RPL24</name>
    <name type="ordered locus">YALI0E23584g</name>
</gene>
<dbReference type="EMBL" id="CR382131">
    <property type="protein sequence ID" value="CAG79915.1"/>
    <property type="molecule type" value="Genomic_DNA"/>
</dbReference>
<dbReference type="RefSeq" id="XP_504316.1">
    <property type="nucleotide sequence ID" value="XM_504316.1"/>
</dbReference>
<dbReference type="SMR" id="Q6C4U6"/>
<dbReference type="FunCoup" id="Q6C4U6">
    <property type="interactions" value="930"/>
</dbReference>
<dbReference type="STRING" id="284591.Q6C4U6"/>
<dbReference type="EnsemblFungi" id="CAG79915">
    <property type="protein sequence ID" value="CAG79915"/>
    <property type="gene ID" value="YALI0_E23584g"/>
</dbReference>
<dbReference type="KEGG" id="yli:2912307"/>
<dbReference type="VEuPathDB" id="FungiDB:YALI0_E23584g"/>
<dbReference type="HOGENOM" id="CLU_106411_0_0_1"/>
<dbReference type="InParanoid" id="Q6C4U6"/>
<dbReference type="OMA" id="PGHGKKM"/>
<dbReference type="OrthoDB" id="120807at4891"/>
<dbReference type="Proteomes" id="UP000001300">
    <property type="component" value="Chromosome E"/>
</dbReference>
<dbReference type="GO" id="GO:0022625">
    <property type="term" value="C:cytosolic large ribosomal subunit"/>
    <property type="evidence" value="ECO:0000318"/>
    <property type="project" value="GO_Central"/>
</dbReference>
<dbReference type="GO" id="GO:0003729">
    <property type="term" value="F:mRNA binding"/>
    <property type="evidence" value="ECO:0000318"/>
    <property type="project" value="GO_Central"/>
</dbReference>
<dbReference type="GO" id="GO:0003735">
    <property type="term" value="F:structural constituent of ribosome"/>
    <property type="evidence" value="ECO:0000318"/>
    <property type="project" value="GO_Central"/>
</dbReference>
<dbReference type="GO" id="GO:0002181">
    <property type="term" value="P:cytoplasmic translation"/>
    <property type="evidence" value="ECO:0000318"/>
    <property type="project" value="GO_Central"/>
</dbReference>
<dbReference type="CDD" id="cd00472">
    <property type="entry name" value="Ribosomal_L24e_L24"/>
    <property type="match status" value="1"/>
</dbReference>
<dbReference type="FunFam" id="2.30.170.20:FF:000002">
    <property type="entry name" value="60S ribosomal protein L24"/>
    <property type="match status" value="1"/>
</dbReference>
<dbReference type="Gene3D" id="6.10.250.1270">
    <property type="match status" value="1"/>
</dbReference>
<dbReference type="Gene3D" id="2.30.170.20">
    <property type="entry name" value="Ribosomal protein L24e"/>
    <property type="match status" value="1"/>
</dbReference>
<dbReference type="InterPro" id="IPR038630">
    <property type="entry name" value="L24e/L24_sf"/>
</dbReference>
<dbReference type="InterPro" id="IPR056366">
    <property type="entry name" value="Ribosomal_eL24"/>
</dbReference>
<dbReference type="InterPro" id="IPR000988">
    <property type="entry name" value="Ribosomal_eL24-rel_N"/>
</dbReference>
<dbReference type="InterPro" id="IPR023442">
    <property type="entry name" value="Ribosomal_eL24_CS"/>
</dbReference>
<dbReference type="PANTHER" id="PTHR10792">
    <property type="entry name" value="60S RIBOSOMAL PROTEIN L24"/>
    <property type="match status" value="1"/>
</dbReference>
<dbReference type="PANTHER" id="PTHR10792:SF1">
    <property type="entry name" value="RIBOSOMAL PROTEIN L24"/>
    <property type="match status" value="1"/>
</dbReference>
<dbReference type="Pfam" id="PF01246">
    <property type="entry name" value="Ribosomal_L24e"/>
    <property type="match status" value="1"/>
</dbReference>
<dbReference type="SUPFAM" id="SSF57716">
    <property type="entry name" value="Glucocorticoid receptor-like (DNA-binding domain)"/>
    <property type="match status" value="1"/>
</dbReference>
<dbReference type="PROSITE" id="PS01073">
    <property type="entry name" value="RIBOSOMAL_L24E"/>
    <property type="match status" value="1"/>
</dbReference>
<organism>
    <name type="scientific">Yarrowia lipolytica (strain CLIB 122 / E 150)</name>
    <name type="common">Yeast</name>
    <name type="synonym">Candida lipolytica</name>
    <dbReference type="NCBI Taxonomy" id="284591"/>
    <lineage>
        <taxon>Eukaryota</taxon>
        <taxon>Fungi</taxon>
        <taxon>Dikarya</taxon>
        <taxon>Ascomycota</taxon>
        <taxon>Saccharomycotina</taxon>
        <taxon>Dipodascomycetes</taxon>
        <taxon>Dipodascales</taxon>
        <taxon>Dipodascales incertae sedis</taxon>
        <taxon>Yarrowia</taxon>
    </lineage>
</organism>
<proteinExistence type="inferred from homology"/>
<name>RL24_YARLI</name>
<feature type="chain" id="PRO_0000136893" description="Large ribosomal subunit protein eL24">
    <location>
        <begin position="1"/>
        <end position="155"/>
    </location>
</feature>
<feature type="region of interest" description="Disordered" evidence="1">
    <location>
        <begin position="93"/>
        <end position="155"/>
    </location>
</feature>
<feature type="compositionally biased region" description="Basic and acidic residues" evidence="1">
    <location>
        <begin position="93"/>
        <end position="123"/>
    </location>
</feature>